<protein>
    <recommendedName>
        <fullName>F-box protein At1g11810</fullName>
    </recommendedName>
</protein>
<organism>
    <name type="scientific">Arabidopsis thaliana</name>
    <name type="common">Mouse-ear cress</name>
    <dbReference type="NCBI Taxonomy" id="3702"/>
    <lineage>
        <taxon>Eukaryota</taxon>
        <taxon>Viridiplantae</taxon>
        <taxon>Streptophyta</taxon>
        <taxon>Embryophyta</taxon>
        <taxon>Tracheophyta</taxon>
        <taxon>Spermatophyta</taxon>
        <taxon>Magnoliopsida</taxon>
        <taxon>eudicotyledons</taxon>
        <taxon>Gunneridae</taxon>
        <taxon>Pentapetalae</taxon>
        <taxon>rosids</taxon>
        <taxon>malvids</taxon>
        <taxon>Brassicales</taxon>
        <taxon>Brassicaceae</taxon>
        <taxon>Camelineae</taxon>
        <taxon>Arabidopsis</taxon>
    </lineage>
</organism>
<feature type="chain" id="PRO_0000283284" description="F-box protein At1g11810">
    <location>
        <begin position="1"/>
        <end position="377"/>
    </location>
</feature>
<feature type="domain" description="F-box">
    <location>
        <begin position="2"/>
        <end position="48"/>
    </location>
</feature>
<dbReference type="EMBL" id="AC007296">
    <property type="protein sequence ID" value="AAD30240.1"/>
    <property type="molecule type" value="Genomic_DNA"/>
</dbReference>
<dbReference type="EMBL" id="CP002684">
    <property type="protein sequence ID" value="AEE28789.1"/>
    <property type="molecule type" value="Genomic_DNA"/>
</dbReference>
<dbReference type="EMBL" id="BT029542">
    <property type="protein sequence ID" value="ABL66798.1"/>
    <property type="molecule type" value="mRNA"/>
</dbReference>
<dbReference type="EMBL" id="BT015465">
    <property type="status" value="NOT_ANNOTATED_CDS"/>
    <property type="molecule type" value="mRNA"/>
</dbReference>
<dbReference type="PIR" id="C86252">
    <property type="entry name" value="C86252"/>
</dbReference>
<dbReference type="RefSeq" id="NP_172646.3">
    <property type="nucleotide sequence ID" value="NM_101053.3"/>
</dbReference>
<dbReference type="BioGRID" id="22969">
    <property type="interactions" value="2"/>
</dbReference>
<dbReference type="IntAct" id="Q9SA94">
    <property type="interactions" value="2"/>
</dbReference>
<dbReference type="STRING" id="3702.Q9SA94"/>
<dbReference type="iPTMnet" id="Q9SA94"/>
<dbReference type="PaxDb" id="3702-AT1G11810.1"/>
<dbReference type="DNASU" id="837729"/>
<dbReference type="EnsemblPlants" id="AT1G11810.1">
    <property type="protein sequence ID" value="AT1G11810.1"/>
    <property type="gene ID" value="AT1G11810"/>
</dbReference>
<dbReference type="GeneID" id="837729"/>
<dbReference type="Gramene" id="AT1G11810.1">
    <property type="protein sequence ID" value="AT1G11810.1"/>
    <property type="gene ID" value="AT1G11810"/>
</dbReference>
<dbReference type="KEGG" id="ath:AT1G11810"/>
<dbReference type="Araport" id="AT1G11810"/>
<dbReference type="TAIR" id="AT1G11810">
    <property type="gene designation" value="PEG1"/>
</dbReference>
<dbReference type="HOGENOM" id="CLU_034692_0_0_1"/>
<dbReference type="InParanoid" id="Q9SA94"/>
<dbReference type="OMA" id="CKKWEAS"/>
<dbReference type="PhylomeDB" id="Q9SA94"/>
<dbReference type="PRO" id="PR:Q9SA94"/>
<dbReference type="Proteomes" id="UP000006548">
    <property type="component" value="Chromosome 1"/>
</dbReference>
<dbReference type="ExpressionAtlas" id="Q9SA94">
    <property type="expression patterns" value="baseline and differential"/>
</dbReference>
<dbReference type="CDD" id="cd22157">
    <property type="entry name" value="F-box_AtFBW1-like"/>
    <property type="match status" value="1"/>
</dbReference>
<dbReference type="InterPro" id="IPR006527">
    <property type="entry name" value="F-box-assoc_dom_typ1"/>
</dbReference>
<dbReference type="InterPro" id="IPR017451">
    <property type="entry name" value="F-box-assoc_interact_dom"/>
</dbReference>
<dbReference type="InterPro" id="IPR036047">
    <property type="entry name" value="F-box-like_dom_sf"/>
</dbReference>
<dbReference type="InterPro" id="IPR001810">
    <property type="entry name" value="F-box_dom"/>
</dbReference>
<dbReference type="InterPro" id="IPR050796">
    <property type="entry name" value="SCF_F-box_component"/>
</dbReference>
<dbReference type="NCBIfam" id="TIGR01640">
    <property type="entry name" value="F_box_assoc_1"/>
    <property type="match status" value="1"/>
</dbReference>
<dbReference type="PANTHER" id="PTHR31672">
    <property type="entry name" value="BNACNNG10540D PROTEIN"/>
    <property type="match status" value="1"/>
</dbReference>
<dbReference type="PANTHER" id="PTHR31672:SF13">
    <property type="entry name" value="F-BOX PROTEIN CPR30-LIKE"/>
    <property type="match status" value="1"/>
</dbReference>
<dbReference type="Pfam" id="PF00646">
    <property type="entry name" value="F-box"/>
    <property type="match status" value="1"/>
</dbReference>
<dbReference type="Pfam" id="PF07734">
    <property type="entry name" value="FBA_1"/>
    <property type="match status" value="1"/>
</dbReference>
<dbReference type="SUPFAM" id="SSF81383">
    <property type="entry name" value="F-box domain"/>
    <property type="match status" value="1"/>
</dbReference>
<sequence>MTTTMSTLPVVLVDEILARVPITSLRSLRSTCKKWEASSKTNLVGGKATARKSSHVGFILIGDKICSMKLDLNGGDDFVDTSVNQVSAFDGFAISQLFHCDGLLFCISNNHYSNYTLMVCNMYLGETRLIQNRSLFESYQNFCSYAFGYDSSKNRNHKILRNNSVSGGYEIYSLKSDSWKDLNVDLEKSIHLWRLGSVSLKGNAYFRVIKVIEEGVWEYNLLCFDFTRESFGKLLSLPFESLGDEGEGIMVISCVRDDHLAVLYQRDTLGIWISTEIEPNKVSWREFLQVDLATLDGFPDVFIAGRFIVDEEKQVVVVFGQETELDLNHGNAFIFGRDGYFTSFTVGDAPPEDFTSYVPSLVSLQIDKTGKRKARDD</sequence>
<reference key="1">
    <citation type="journal article" date="2000" name="Nature">
        <title>Sequence and analysis of chromosome 1 of the plant Arabidopsis thaliana.</title>
        <authorList>
            <person name="Theologis A."/>
            <person name="Ecker J.R."/>
            <person name="Palm C.J."/>
            <person name="Federspiel N.A."/>
            <person name="Kaul S."/>
            <person name="White O."/>
            <person name="Alonso J."/>
            <person name="Altafi H."/>
            <person name="Araujo R."/>
            <person name="Bowman C.L."/>
            <person name="Brooks S.Y."/>
            <person name="Buehler E."/>
            <person name="Chan A."/>
            <person name="Chao Q."/>
            <person name="Chen H."/>
            <person name="Cheuk R.F."/>
            <person name="Chin C.W."/>
            <person name="Chung M.K."/>
            <person name="Conn L."/>
            <person name="Conway A.B."/>
            <person name="Conway A.R."/>
            <person name="Creasy T.H."/>
            <person name="Dewar K."/>
            <person name="Dunn P."/>
            <person name="Etgu P."/>
            <person name="Feldblyum T.V."/>
            <person name="Feng J.-D."/>
            <person name="Fong B."/>
            <person name="Fujii C.Y."/>
            <person name="Gill J.E."/>
            <person name="Goldsmith A.D."/>
            <person name="Haas B."/>
            <person name="Hansen N.F."/>
            <person name="Hughes B."/>
            <person name="Huizar L."/>
            <person name="Hunter J.L."/>
            <person name="Jenkins J."/>
            <person name="Johnson-Hopson C."/>
            <person name="Khan S."/>
            <person name="Khaykin E."/>
            <person name="Kim C.J."/>
            <person name="Koo H.L."/>
            <person name="Kremenetskaia I."/>
            <person name="Kurtz D.B."/>
            <person name="Kwan A."/>
            <person name="Lam B."/>
            <person name="Langin-Hooper S."/>
            <person name="Lee A."/>
            <person name="Lee J.M."/>
            <person name="Lenz C.A."/>
            <person name="Li J.H."/>
            <person name="Li Y.-P."/>
            <person name="Lin X."/>
            <person name="Liu S.X."/>
            <person name="Liu Z.A."/>
            <person name="Luros J.S."/>
            <person name="Maiti R."/>
            <person name="Marziali A."/>
            <person name="Militscher J."/>
            <person name="Miranda M."/>
            <person name="Nguyen M."/>
            <person name="Nierman W.C."/>
            <person name="Osborne B.I."/>
            <person name="Pai G."/>
            <person name="Peterson J."/>
            <person name="Pham P.K."/>
            <person name="Rizzo M."/>
            <person name="Rooney T."/>
            <person name="Rowley D."/>
            <person name="Sakano H."/>
            <person name="Salzberg S.L."/>
            <person name="Schwartz J.R."/>
            <person name="Shinn P."/>
            <person name="Southwick A.M."/>
            <person name="Sun H."/>
            <person name="Tallon L.J."/>
            <person name="Tambunga G."/>
            <person name="Toriumi M.J."/>
            <person name="Town C.D."/>
            <person name="Utterback T."/>
            <person name="Van Aken S."/>
            <person name="Vaysberg M."/>
            <person name="Vysotskaia V.S."/>
            <person name="Walker M."/>
            <person name="Wu D."/>
            <person name="Yu G."/>
            <person name="Fraser C.M."/>
            <person name="Venter J.C."/>
            <person name="Davis R.W."/>
        </authorList>
    </citation>
    <scope>NUCLEOTIDE SEQUENCE [LARGE SCALE GENOMIC DNA]</scope>
    <source>
        <strain>cv. Columbia</strain>
    </source>
</reference>
<reference key="2">
    <citation type="journal article" date="2017" name="Plant J.">
        <title>Araport11: a complete reannotation of the Arabidopsis thaliana reference genome.</title>
        <authorList>
            <person name="Cheng C.Y."/>
            <person name="Krishnakumar V."/>
            <person name="Chan A.P."/>
            <person name="Thibaud-Nissen F."/>
            <person name="Schobel S."/>
            <person name="Town C.D."/>
        </authorList>
    </citation>
    <scope>GENOME REANNOTATION</scope>
    <source>
        <strain>cv. Columbia</strain>
    </source>
</reference>
<reference key="3">
    <citation type="submission" date="2006-12" db="EMBL/GenBank/DDBJ databases">
        <title>Arabidopsis ORF clones.</title>
        <authorList>
            <person name="Bautista V.R."/>
            <person name="Kim C.J."/>
            <person name="Chen H."/>
            <person name="Quinitio C."/>
            <person name="Ecker J.R."/>
        </authorList>
    </citation>
    <scope>NUCLEOTIDE SEQUENCE [LARGE SCALE MRNA]</scope>
    <source>
        <strain>cv. Columbia</strain>
    </source>
</reference>
<reference key="4">
    <citation type="submission" date="2004-09" db="EMBL/GenBank/DDBJ databases">
        <authorList>
            <consortium name="Center for eukaryotic structural genomics (CESG)"/>
        </authorList>
    </citation>
    <scope>NUCLEOTIDE SEQUENCE [LARGE SCALE MRNA] OF 19-377</scope>
    <source>
        <strain>cv. Columbia</strain>
    </source>
</reference>
<proteinExistence type="evidence at protein level"/>
<comment type="interaction">
    <interactant intactId="EBI-4433406">
        <id>Q9SA94</id>
    </interactant>
    <interactant intactId="EBI-3946474">
        <id>O23661</id>
        <label>ARF3</label>
    </interactant>
    <organismsDiffer>false</organismsDiffer>
    <experiments>3</experiments>
</comment>
<comment type="interaction">
    <interactant intactId="EBI-4433406">
        <id>Q9SA94</id>
    </interactant>
    <interactant intactId="EBI-4426557">
        <id>Q84MB2</id>
        <label>TIFY8</label>
    </interactant>
    <organismsDiffer>false</organismsDiffer>
    <experiments>4</experiments>
</comment>
<accession>Q9SA94</accession>
<keyword id="KW-1185">Reference proteome</keyword>
<name>FB5_ARATH</name>
<gene>
    <name type="ordered locus">At1g11810</name>
    <name type="ORF">F25C20.2</name>
</gene>